<evidence type="ECO:0000250" key="1">
    <source>
        <dbReference type="UniProtKB" id="G4SW86"/>
    </source>
</evidence>
<evidence type="ECO:0000250" key="2">
    <source>
        <dbReference type="UniProtKB" id="O88455"/>
    </source>
</evidence>
<evidence type="ECO:0000250" key="3">
    <source>
        <dbReference type="UniProtKB" id="Q9UBM7"/>
    </source>
</evidence>
<evidence type="ECO:0000255" key="4"/>
<evidence type="ECO:0000256" key="5">
    <source>
        <dbReference type="SAM" id="MobiDB-lite"/>
    </source>
</evidence>
<evidence type="ECO:0000305" key="6"/>
<dbReference type="EC" id="1.3.1.21" evidence="2"/>
<dbReference type="EMBL" id="BC044995">
    <property type="protein sequence ID" value="AAH44995.1"/>
    <property type="molecule type" value="mRNA"/>
</dbReference>
<dbReference type="RefSeq" id="NP_001079586.1">
    <property type="nucleotide sequence ID" value="NM_001086117.1"/>
</dbReference>
<dbReference type="RefSeq" id="XP_018114839.1">
    <property type="nucleotide sequence ID" value="XM_018259350.1"/>
</dbReference>
<dbReference type="SMR" id="Q7ZXH1"/>
<dbReference type="DNASU" id="379273"/>
<dbReference type="GeneID" id="379273"/>
<dbReference type="KEGG" id="xla:379273"/>
<dbReference type="AGR" id="Xenbase:XB-GENE-17334842"/>
<dbReference type="CTD" id="379273"/>
<dbReference type="Xenbase" id="XB-GENE-17334842">
    <property type="gene designation" value="dhcr7.S"/>
</dbReference>
<dbReference type="OMA" id="VKHPVNL"/>
<dbReference type="OrthoDB" id="5326588at2759"/>
<dbReference type="UniPathway" id="UPA00063"/>
<dbReference type="Proteomes" id="UP000186698">
    <property type="component" value="Chromosome 4S"/>
</dbReference>
<dbReference type="Bgee" id="379273">
    <property type="expression patterns" value="Expressed in neurula embryo and 19 other cell types or tissues"/>
</dbReference>
<dbReference type="GO" id="GO:0005789">
    <property type="term" value="C:endoplasmic reticulum membrane"/>
    <property type="evidence" value="ECO:0000318"/>
    <property type="project" value="GO_Central"/>
</dbReference>
<dbReference type="GO" id="GO:0047598">
    <property type="term" value="F:7-dehydrocholesterol reductase activity"/>
    <property type="evidence" value="ECO:0000318"/>
    <property type="project" value="GO_Central"/>
</dbReference>
<dbReference type="GO" id="GO:0050661">
    <property type="term" value="F:NADP binding"/>
    <property type="evidence" value="ECO:0000250"/>
    <property type="project" value="UniProtKB"/>
</dbReference>
<dbReference type="GO" id="GO:0016132">
    <property type="term" value="P:brassinosteroid biosynthetic process"/>
    <property type="evidence" value="ECO:0007669"/>
    <property type="project" value="TreeGrafter"/>
</dbReference>
<dbReference type="GO" id="GO:0006695">
    <property type="term" value="P:cholesterol biosynthetic process"/>
    <property type="evidence" value="ECO:0000318"/>
    <property type="project" value="GO_Central"/>
</dbReference>
<dbReference type="FunFam" id="1.20.120.1630:FF:000004">
    <property type="entry name" value="7-dehydrocholesterol reductase"/>
    <property type="match status" value="1"/>
</dbReference>
<dbReference type="Gene3D" id="1.20.120.1630">
    <property type="match status" value="1"/>
</dbReference>
<dbReference type="InterPro" id="IPR001171">
    <property type="entry name" value="ERG24_DHCR-like"/>
</dbReference>
<dbReference type="InterPro" id="IPR018083">
    <property type="entry name" value="Sterol_reductase_CS"/>
</dbReference>
<dbReference type="PANTHER" id="PTHR21257:SF38">
    <property type="entry name" value="7-DEHYDROCHOLESTEROL REDUCTASE"/>
    <property type="match status" value="1"/>
</dbReference>
<dbReference type="PANTHER" id="PTHR21257">
    <property type="entry name" value="DELTA(14)-STEROL REDUCTASE"/>
    <property type="match status" value="1"/>
</dbReference>
<dbReference type="Pfam" id="PF01222">
    <property type="entry name" value="ERG4_ERG24"/>
    <property type="match status" value="1"/>
</dbReference>
<dbReference type="PROSITE" id="PS01017">
    <property type="entry name" value="STEROL_REDUCT_1"/>
    <property type="match status" value="1"/>
</dbReference>
<dbReference type="PROSITE" id="PS01018">
    <property type="entry name" value="STEROL_REDUCT_2"/>
    <property type="match status" value="1"/>
</dbReference>
<gene>
    <name type="primary">dhcr7</name>
</gene>
<feature type="chain" id="PRO_0000207506" description="7-dehydrocholesterol reductase">
    <location>
        <begin position="1"/>
        <end position="473"/>
    </location>
</feature>
<feature type="transmembrane region" description="Helical" evidence="4">
    <location>
        <begin position="36"/>
        <end position="56"/>
    </location>
</feature>
<feature type="transmembrane region" description="Helical" evidence="4">
    <location>
        <begin position="97"/>
        <end position="117"/>
    </location>
</feature>
<feature type="transmembrane region" description="Helical" evidence="4">
    <location>
        <begin position="175"/>
        <end position="195"/>
    </location>
</feature>
<feature type="transmembrane region" description="Helical" evidence="4">
    <location>
        <begin position="264"/>
        <end position="284"/>
    </location>
</feature>
<feature type="transmembrane region" description="Helical" evidence="4">
    <location>
        <begin position="304"/>
        <end position="324"/>
    </location>
</feature>
<feature type="transmembrane region" description="Helical" evidence="4">
    <location>
        <begin position="329"/>
        <end position="349"/>
    </location>
</feature>
<feature type="transmembrane region" description="Helical" evidence="4">
    <location>
        <begin position="419"/>
        <end position="439"/>
    </location>
</feature>
<feature type="region of interest" description="Disordered" evidence="5">
    <location>
        <begin position="1"/>
        <end position="20"/>
    </location>
</feature>
<feature type="binding site" evidence="1">
    <location>
        <position position="356"/>
    </location>
    <ligand>
        <name>NADP(+)</name>
        <dbReference type="ChEBI" id="CHEBI:58349"/>
    </ligand>
</feature>
<feature type="binding site" evidence="1">
    <location>
        <position position="360"/>
    </location>
    <ligand>
        <name>NADP(+)</name>
        <dbReference type="ChEBI" id="CHEBI:58349"/>
    </ligand>
</feature>
<feature type="binding site" evidence="1">
    <location>
        <position position="393"/>
    </location>
    <ligand>
        <name>NADP(+)</name>
        <dbReference type="ChEBI" id="CHEBI:58349"/>
    </ligand>
</feature>
<feature type="binding site" evidence="1">
    <location>
        <position position="398"/>
    </location>
    <ligand>
        <name>NADP(+)</name>
        <dbReference type="ChEBI" id="CHEBI:58349"/>
    </ligand>
</feature>
<feature type="binding site" evidence="1">
    <location>
        <begin position="405"/>
        <end position="406"/>
    </location>
    <ligand>
        <name>NADP(+)</name>
        <dbReference type="ChEBI" id="CHEBI:58349"/>
    </ligand>
</feature>
<feature type="binding site" evidence="1">
    <location>
        <position position="445"/>
    </location>
    <ligand>
        <name>NADP(+)</name>
        <dbReference type="ChEBI" id="CHEBI:58349"/>
    </ligand>
</feature>
<feature type="binding site" evidence="1">
    <location>
        <begin position="449"/>
        <end position="453"/>
    </location>
    <ligand>
        <name>NADP(+)</name>
        <dbReference type="ChEBI" id="CHEBI:58349"/>
    </ligand>
</feature>
<feature type="binding site" evidence="1">
    <location>
        <position position="460"/>
    </location>
    <ligand>
        <name>NADP(+)</name>
        <dbReference type="ChEBI" id="CHEBI:58349"/>
    </ligand>
</feature>
<organism>
    <name type="scientific">Xenopus laevis</name>
    <name type="common">African clawed frog</name>
    <dbReference type="NCBI Taxonomy" id="8355"/>
    <lineage>
        <taxon>Eukaryota</taxon>
        <taxon>Metazoa</taxon>
        <taxon>Chordata</taxon>
        <taxon>Craniata</taxon>
        <taxon>Vertebrata</taxon>
        <taxon>Euteleostomi</taxon>
        <taxon>Amphibia</taxon>
        <taxon>Batrachia</taxon>
        <taxon>Anura</taxon>
        <taxon>Pipoidea</taxon>
        <taxon>Pipidae</taxon>
        <taxon>Xenopodinae</taxon>
        <taxon>Xenopus</taxon>
        <taxon>Xenopus</taxon>
    </lineage>
</organism>
<name>DHCR7_XENLA</name>
<keyword id="KW-0152">Cholesterol biosynthesis</keyword>
<keyword id="KW-0153">Cholesterol metabolism</keyword>
<keyword id="KW-0256">Endoplasmic reticulum</keyword>
<keyword id="KW-0444">Lipid biosynthesis</keyword>
<keyword id="KW-0443">Lipid metabolism</keyword>
<keyword id="KW-0472">Membrane</keyword>
<keyword id="KW-0521">NADP</keyword>
<keyword id="KW-0560">Oxidoreductase</keyword>
<keyword id="KW-1185">Reference proteome</keyword>
<keyword id="KW-0752">Steroid biosynthesis</keyword>
<keyword id="KW-0753">Steroid metabolism</keyword>
<keyword id="KW-0756">Sterol biosynthesis</keyword>
<keyword id="KW-1207">Sterol metabolism</keyword>
<keyword id="KW-0812">Transmembrane</keyword>
<keyword id="KW-1133">Transmembrane helix</keyword>
<proteinExistence type="evidence at transcript level"/>
<protein>
    <recommendedName>
        <fullName>7-dehydrocholesterol reductase</fullName>
        <shortName>7-DHC reductase</shortName>
        <ecNumber evidence="2">1.3.1.21</ecNumber>
    </recommendedName>
    <alternativeName>
        <fullName>Sterol Delta(7)-reductase</fullName>
    </alternativeName>
</protein>
<reference key="1">
    <citation type="submission" date="2003-01" db="EMBL/GenBank/DDBJ databases">
        <authorList>
            <consortium name="NIH - Xenopus Gene Collection (XGC) project"/>
        </authorList>
    </citation>
    <scope>NUCLEOTIDE SEQUENCE [LARGE SCALE MRNA]</scope>
    <source>
        <tissue>Embryo</tissue>
    </source>
</reference>
<comment type="function">
    <text evidence="2 3">Catalyzes the last step of the cholesterol synthesis pathway, which transforms cholesta-5,7-dien-3beta-ol (7-dehydrocholesterol,7-DHC) into cholesterol by reducing the C7-C8 double bond of its sterol core (By similarity). Can also metabolize cholesta-5,7,24-trien-3beta-ol (7-dehydrodemosterol, 7-DHD) to desmosterol, which is then metabolized by the Delta(24)-sterol reductase (DHCR24) to cholesterol (By similarity). Modulates ferroptosis (a form of regulated cell death driven by iron-dependent lipid peroxidation) through the metabolic breakdown of the anti-ferroptotic metabolites 7-DHC and 7-DHD which, when accumulated, divert the propagation of peroxyl radical-mediated damage from phospholipid components to its sterol core, protecting plasma and mitochondrial membranes from phospholipid autoxidation (By similarity).</text>
</comment>
<comment type="catalytic activity">
    <reaction evidence="3">
        <text>cholesterol + NADP(+) = 7-dehydrocholesterol + NADPH + H(+)</text>
        <dbReference type="Rhea" id="RHEA:23984"/>
        <dbReference type="ChEBI" id="CHEBI:15378"/>
        <dbReference type="ChEBI" id="CHEBI:16113"/>
        <dbReference type="ChEBI" id="CHEBI:17759"/>
        <dbReference type="ChEBI" id="CHEBI:57783"/>
        <dbReference type="ChEBI" id="CHEBI:58349"/>
        <dbReference type="EC" id="1.3.1.21"/>
    </reaction>
    <physiologicalReaction direction="right-to-left" evidence="3">
        <dbReference type="Rhea" id="RHEA:23986"/>
    </physiologicalReaction>
</comment>
<comment type="catalytic activity">
    <reaction evidence="2">
        <text>7-dehydrodesmosterol + NADPH + H(+) = desmosterol + NADP(+)</text>
        <dbReference type="Rhea" id="RHEA:46740"/>
        <dbReference type="ChEBI" id="CHEBI:15378"/>
        <dbReference type="ChEBI" id="CHEBI:17737"/>
        <dbReference type="ChEBI" id="CHEBI:27910"/>
        <dbReference type="ChEBI" id="CHEBI:57783"/>
        <dbReference type="ChEBI" id="CHEBI:58349"/>
    </reaction>
    <physiologicalReaction direction="left-to-right" evidence="2">
        <dbReference type="Rhea" id="RHEA:46741"/>
    </physiologicalReaction>
</comment>
<comment type="pathway">
    <text evidence="2">Steroid biosynthesis; cholesterol biosynthesis.</text>
</comment>
<comment type="subcellular location">
    <subcellularLocation>
        <location evidence="3">Endoplasmic reticulum membrane</location>
        <topology evidence="4">Multi-pass membrane protein</topology>
    </subcellularLocation>
</comment>
<comment type="similarity">
    <text evidence="6">Belongs to the ERG4/ERG24 family.</text>
</comment>
<sequence length="473" mass="54823">MGERRRANASRGDKKVANGEKQHVGQWGRAWEVDYFSLASVIFLLAFAPLIVYYFVMSCDQYQCALTAPVLDLYSGKARLSDIWDKTPALTWTAVKIYLAWVSFQVFLYMFLPDILHKFVPGYEGGVQEGARTPAGLINKYQVNGLQAWTITHLLWFANAYHFHWFSPTIVIDNWIPLLWCANLLGYSVATFALVKANFFPTNANDCKFTGNFFYDYMMGIEFNPRIGKWFDFKLFFNGRPGIVAWTLINLSYAAKQQELYGQVTNSMILVNVLQAIYVVDFFWNESWYLKTIDICHDHFGWYLGWGDCVWLPYLYTLQGLYLVYNPVELSTTAAVAVLLLGLIGYYIFRMTNHQKDLFRRTNGNCKIWGKKPKSIECFYVSADGKRHYSKLMISGFWGVARHLNYTGDLMGSLAYCLACGFDHLLPYFYFIYMTILLVHRCIRDEHRCSSKYGKDWKLYTSAVPYRLLPGLF</sequence>
<accession>Q7ZXH1</accession>